<feature type="chain" id="PRO_0000081646" description="Multiple RNA-binding domain-containing protein 1">
    <location>
        <begin position="1"/>
        <end position="828"/>
    </location>
</feature>
<feature type="domain" description="RRM 1" evidence="2">
    <location>
        <begin position="2"/>
        <end position="89"/>
    </location>
</feature>
<feature type="domain" description="RRM 2" evidence="2">
    <location>
        <begin position="301"/>
        <end position="379"/>
    </location>
</feature>
<feature type="domain" description="RRM 3" evidence="2">
    <location>
        <begin position="485"/>
        <end position="557"/>
    </location>
</feature>
<feature type="domain" description="RRM 4" evidence="2">
    <location>
        <begin position="605"/>
        <end position="688"/>
    </location>
</feature>
<feature type="domain" description="RRM 5" evidence="2">
    <location>
        <begin position="703"/>
        <end position="780"/>
    </location>
</feature>
<feature type="region of interest" description="Disordered" evidence="3">
    <location>
        <begin position="97"/>
        <end position="125"/>
    </location>
</feature>
<feature type="region of interest" description="Disordered" evidence="3">
    <location>
        <begin position="166"/>
        <end position="293"/>
    </location>
</feature>
<feature type="compositionally biased region" description="Acidic residues" evidence="3">
    <location>
        <begin position="195"/>
        <end position="207"/>
    </location>
</feature>
<feature type="compositionally biased region" description="Acidic residues" evidence="3">
    <location>
        <begin position="214"/>
        <end position="227"/>
    </location>
</feature>
<feature type="compositionally biased region" description="Basic and acidic residues" evidence="3">
    <location>
        <begin position="241"/>
        <end position="272"/>
    </location>
</feature>
<reference key="1">
    <citation type="journal article" date="2004" name="Nature">
        <title>Genome evolution in yeasts.</title>
        <authorList>
            <person name="Dujon B."/>
            <person name="Sherman D."/>
            <person name="Fischer G."/>
            <person name="Durrens P."/>
            <person name="Casaregola S."/>
            <person name="Lafontaine I."/>
            <person name="de Montigny J."/>
            <person name="Marck C."/>
            <person name="Neuveglise C."/>
            <person name="Talla E."/>
            <person name="Goffard N."/>
            <person name="Frangeul L."/>
            <person name="Aigle M."/>
            <person name="Anthouard V."/>
            <person name="Babour A."/>
            <person name="Barbe V."/>
            <person name="Barnay S."/>
            <person name="Blanchin S."/>
            <person name="Beckerich J.-M."/>
            <person name="Beyne E."/>
            <person name="Bleykasten C."/>
            <person name="Boisrame A."/>
            <person name="Boyer J."/>
            <person name="Cattolico L."/>
            <person name="Confanioleri F."/>
            <person name="de Daruvar A."/>
            <person name="Despons L."/>
            <person name="Fabre E."/>
            <person name="Fairhead C."/>
            <person name="Ferry-Dumazet H."/>
            <person name="Groppi A."/>
            <person name="Hantraye F."/>
            <person name="Hennequin C."/>
            <person name="Jauniaux N."/>
            <person name="Joyet P."/>
            <person name="Kachouri R."/>
            <person name="Kerrest A."/>
            <person name="Koszul R."/>
            <person name="Lemaire M."/>
            <person name="Lesur I."/>
            <person name="Ma L."/>
            <person name="Muller H."/>
            <person name="Nicaud J.-M."/>
            <person name="Nikolski M."/>
            <person name="Oztas S."/>
            <person name="Ozier-Kalogeropoulos O."/>
            <person name="Pellenz S."/>
            <person name="Potier S."/>
            <person name="Richard G.-F."/>
            <person name="Straub M.-L."/>
            <person name="Suleau A."/>
            <person name="Swennen D."/>
            <person name="Tekaia F."/>
            <person name="Wesolowski-Louvel M."/>
            <person name="Westhof E."/>
            <person name="Wirth B."/>
            <person name="Zeniou-Meyer M."/>
            <person name="Zivanovic Y."/>
            <person name="Bolotin-Fukuhara M."/>
            <person name="Thierry A."/>
            <person name="Bouchier C."/>
            <person name="Caudron B."/>
            <person name="Scarpelli C."/>
            <person name="Gaillardin C."/>
            <person name="Weissenbach J."/>
            <person name="Wincker P."/>
            <person name="Souciet J.-L."/>
        </authorList>
    </citation>
    <scope>NUCLEOTIDE SEQUENCE [LARGE SCALE GENOMIC DNA]</scope>
    <source>
        <strain>CLIB 122 / E 150</strain>
    </source>
</reference>
<keyword id="KW-0539">Nucleus</keyword>
<keyword id="KW-1185">Reference proteome</keyword>
<keyword id="KW-0677">Repeat</keyword>
<keyword id="KW-0687">Ribonucleoprotein</keyword>
<keyword id="KW-0694">RNA-binding</keyword>
<keyword id="KW-0698">rRNA processing</keyword>
<comment type="function">
    <text evidence="1">Involved in pre-rRNA processing.</text>
</comment>
<comment type="subcellular location">
    <subcellularLocation>
        <location evidence="1">Nucleus</location>
    </subcellularLocation>
</comment>
<comment type="similarity">
    <text evidence="4">Belongs to the RRM MRD1 family.</text>
</comment>
<name>MRD1_YARLI</name>
<gene>
    <name type="primary">MRD1</name>
    <name type="ordered locus">YALI0B12276g</name>
</gene>
<evidence type="ECO:0000250" key="1"/>
<evidence type="ECO:0000255" key="2">
    <source>
        <dbReference type="PROSITE-ProRule" id="PRU00176"/>
    </source>
</evidence>
<evidence type="ECO:0000256" key="3">
    <source>
        <dbReference type="SAM" id="MobiDB-lite"/>
    </source>
</evidence>
<evidence type="ECO:0000305" key="4"/>
<proteinExistence type="inferred from homology"/>
<accession>Q6CEW9</accession>
<dbReference type="EMBL" id="CR382128">
    <property type="protein sequence ID" value="CAG83044.1"/>
    <property type="molecule type" value="Genomic_DNA"/>
</dbReference>
<dbReference type="RefSeq" id="XP_500793.1">
    <property type="nucleotide sequence ID" value="XM_500793.1"/>
</dbReference>
<dbReference type="SMR" id="Q6CEW9"/>
<dbReference type="FunCoup" id="Q6CEW9">
    <property type="interactions" value="1198"/>
</dbReference>
<dbReference type="STRING" id="284591.Q6CEW9"/>
<dbReference type="EnsemblFungi" id="CAG83044">
    <property type="protein sequence ID" value="CAG83044"/>
    <property type="gene ID" value="YALI0_B12276g"/>
</dbReference>
<dbReference type="KEGG" id="yli:2907128"/>
<dbReference type="VEuPathDB" id="FungiDB:YALI0_B12276g"/>
<dbReference type="HOGENOM" id="CLU_008479_0_0_1"/>
<dbReference type="InParanoid" id="Q6CEW9"/>
<dbReference type="OMA" id="FNNTCIQ"/>
<dbReference type="OrthoDB" id="43025at4891"/>
<dbReference type="Proteomes" id="UP000001300">
    <property type="component" value="Chromosome B"/>
</dbReference>
<dbReference type="GO" id="GO:0016607">
    <property type="term" value="C:nuclear speck"/>
    <property type="evidence" value="ECO:0000318"/>
    <property type="project" value="GO_Central"/>
</dbReference>
<dbReference type="GO" id="GO:0005730">
    <property type="term" value="C:nucleolus"/>
    <property type="evidence" value="ECO:0000318"/>
    <property type="project" value="GO_Central"/>
</dbReference>
<dbReference type="GO" id="GO:1990904">
    <property type="term" value="C:ribonucleoprotein complex"/>
    <property type="evidence" value="ECO:0007669"/>
    <property type="project" value="UniProtKB-KW"/>
</dbReference>
<dbReference type="GO" id="GO:0003723">
    <property type="term" value="F:RNA binding"/>
    <property type="evidence" value="ECO:0000318"/>
    <property type="project" value="GO_Central"/>
</dbReference>
<dbReference type="GO" id="GO:0006364">
    <property type="term" value="P:rRNA processing"/>
    <property type="evidence" value="ECO:0007669"/>
    <property type="project" value="UniProtKB-KW"/>
</dbReference>
<dbReference type="CDD" id="cd12565">
    <property type="entry name" value="RRM1_MRD1"/>
    <property type="match status" value="1"/>
</dbReference>
<dbReference type="CDD" id="cd12320">
    <property type="entry name" value="RRM6_RBM19_RRM5_MRD1"/>
    <property type="match status" value="1"/>
</dbReference>
<dbReference type="FunFam" id="3.30.70.330:FF:000247">
    <property type="entry name" value="Multiple RNA-binding domain-containing protein 1"/>
    <property type="match status" value="1"/>
</dbReference>
<dbReference type="FunFam" id="3.30.70.330:FF:000459">
    <property type="entry name" value="Multiple RNA-binding domain-containing protein 1"/>
    <property type="match status" value="1"/>
</dbReference>
<dbReference type="FunFam" id="3.30.70.330:FF:000706">
    <property type="entry name" value="Multiple RNA-binding domain-containing protein 1"/>
    <property type="match status" value="1"/>
</dbReference>
<dbReference type="FunFam" id="3.30.70.330:FF:001137">
    <property type="entry name" value="Multiple RNA-binding domain-containing protein 1"/>
    <property type="match status" value="1"/>
</dbReference>
<dbReference type="Gene3D" id="3.30.70.330">
    <property type="match status" value="5"/>
</dbReference>
<dbReference type="InterPro" id="IPR012677">
    <property type="entry name" value="Nucleotide-bd_a/b_plait_sf"/>
</dbReference>
<dbReference type="InterPro" id="IPR035979">
    <property type="entry name" value="RBD_domain_sf"/>
</dbReference>
<dbReference type="InterPro" id="IPR050441">
    <property type="entry name" value="RBM"/>
</dbReference>
<dbReference type="InterPro" id="IPR000504">
    <property type="entry name" value="RRM_dom"/>
</dbReference>
<dbReference type="PANTHER" id="PTHR48034">
    <property type="entry name" value="TRANSFORMER-2 SEX-DETERMINING PROTEIN-RELATED"/>
    <property type="match status" value="1"/>
</dbReference>
<dbReference type="Pfam" id="PF00076">
    <property type="entry name" value="RRM_1"/>
    <property type="match status" value="5"/>
</dbReference>
<dbReference type="SMART" id="SM00360">
    <property type="entry name" value="RRM"/>
    <property type="match status" value="5"/>
</dbReference>
<dbReference type="SUPFAM" id="SSF54928">
    <property type="entry name" value="RNA-binding domain, RBD"/>
    <property type="match status" value="3"/>
</dbReference>
<dbReference type="PROSITE" id="PS50102">
    <property type="entry name" value="RRM"/>
    <property type="match status" value="5"/>
</dbReference>
<organism>
    <name type="scientific">Yarrowia lipolytica (strain CLIB 122 / E 150)</name>
    <name type="common">Yeast</name>
    <name type="synonym">Candida lipolytica</name>
    <dbReference type="NCBI Taxonomy" id="284591"/>
    <lineage>
        <taxon>Eukaryota</taxon>
        <taxon>Fungi</taxon>
        <taxon>Dikarya</taxon>
        <taxon>Ascomycota</taxon>
        <taxon>Saccharomycotina</taxon>
        <taxon>Dipodascomycetes</taxon>
        <taxon>Dipodascales</taxon>
        <taxon>Dipodascales incertae sedis</taxon>
        <taxon>Yarrowia</taxon>
    </lineage>
</organism>
<sequence>MSRLIVKNLPPYLDEAGLKKHFSTVKDPKSAGFAPSDITDVKVVRARDGKTRRFGFVGFRSDETAEAAVKYFDTSFINSTKISVAVAMTFTDPNVPLSSRERKRQAAQRAREDAEDDREAKKARYLEKPMTIDDINGLGNASDPRLADYLDAMQVRSNAKTWANNDAGAVANEPQVIQSTASDDEYDEFTGKGDDEIDEDEDEEEESENKKDDDNEEAEEDEEDPVIEDGLAADPGVSDMDWLRQRQTRIKEGEPEEDRENRHTESKSEGKKGKGNAPKAATPVDEEPSEDPTIVSIRKTGRLFLRNLLYTAKEEDFRQLFSQYGELEEVHLPINTKTGQCKGFAHVQFEDPENAIAAYEAQDGKIFQGRLLHILPGKPKKDYNRLDEHDLKNLPLKKQQELKRKAEAAKQQFSWNSLYMNQDAVMESVAKSMGIKKSELIDPDSSDAAVKQALAEATVIGDVKSYFEKMGVDLASFDNKDRDDRVILVKNFPFGTTQPEIAEMFSEYGDLYKVMMPPAGTIAIVIFKHIPDARAAFAKLAFRRFKTSILYLEKGPKNLLPNEKMESDEVEHVKQDKIVTIEDKLSASDVMDTGSNDERPATASTSVFVKNLNFKTTSRVLTDAFKALDGFLVAQVKMKPDSKNKGKFLSMGFGFVEFSSKEAAEIAQKAMDGHVLDGHKLQLKISNRGQDEETTETKKAIDSKILIKNLPFEATKKDVQKLFGAFGSLKTVRVPKKFNSESRGFAFAEYVSAKEAEHAMSALQGTHLLGRRLVLQYAQADASNAEEEIERMQATVSKQAAQRSFADMKLAGEGKRRVDLEGEDEEEF</sequence>
<protein>
    <recommendedName>
        <fullName>Multiple RNA-binding domain-containing protein 1</fullName>
    </recommendedName>
</protein>